<gene>
    <name type="primary">dusp22b</name>
    <name type="synonym">dusp22</name>
    <name type="ORF">si:ch73-170d1.1</name>
    <name type="ORF">zgc:112536</name>
</gene>
<evidence type="ECO:0000250" key="1"/>
<evidence type="ECO:0000255" key="2">
    <source>
        <dbReference type="PROSITE-ProRule" id="PRU00160"/>
    </source>
</evidence>
<evidence type="ECO:0000305" key="3"/>
<organism>
    <name type="scientific">Danio rerio</name>
    <name type="common">Zebrafish</name>
    <name type="synonym">Brachydanio rerio</name>
    <dbReference type="NCBI Taxonomy" id="7955"/>
    <lineage>
        <taxon>Eukaryota</taxon>
        <taxon>Metazoa</taxon>
        <taxon>Chordata</taxon>
        <taxon>Craniata</taxon>
        <taxon>Vertebrata</taxon>
        <taxon>Euteleostomi</taxon>
        <taxon>Actinopterygii</taxon>
        <taxon>Neopterygii</taxon>
        <taxon>Teleostei</taxon>
        <taxon>Ostariophysi</taxon>
        <taxon>Cypriniformes</taxon>
        <taxon>Danionidae</taxon>
        <taxon>Danioninae</taxon>
        <taxon>Danio</taxon>
    </lineage>
</organism>
<proteinExistence type="evidence at transcript level"/>
<feature type="chain" id="PRO_0000244753" description="Dual specificity protein phosphatase 22-B">
    <location>
        <begin position="1"/>
        <end position="183"/>
    </location>
</feature>
<feature type="domain" description="Tyrosine-protein phosphatase" evidence="2">
    <location>
        <begin position="4"/>
        <end position="144"/>
    </location>
</feature>
<feature type="active site" description="Phosphocysteine intermediate" evidence="2">
    <location>
        <position position="88"/>
    </location>
</feature>
<feature type="sequence conflict" description="In Ref. 2; AAH93370." evidence="3" ref="2">
    <original>K</original>
    <variation>R</variation>
    <location>
        <position position="119"/>
    </location>
</feature>
<feature type="sequence conflict" description="In Ref. 2; AAH93370." evidence="3" ref="2">
    <original>F</original>
    <variation>S</variation>
    <location>
        <position position="131"/>
    </location>
</feature>
<feature type="sequence conflict" description="In Ref. 2; AAH93370." evidence="3" ref="2">
    <original>T</original>
    <variation>A</variation>
    <location>
        <position position="170"/>
    </location>
</feature>
<feature type="sequence conflict" description="In Ref. 2; AAH93370." evidence="3" ref="2">
    <original>E</original>
    <variation>D</variation>
    <location>
        <position position="179"/>
    </location>
</feature>
<reference key="1">
    <citation type="journal article" date="2013" name="Nature">
        <title>The zebrafish reference genome sequence and its relationship to the human genome.</title>
        <authorList>
            <person name="Howe K."/>
            <person name="Clark M.D."/>
            <person name="Torroja C.F."/>
            <person name="Torrance J."/>
            <person name="Berthelot C."/>
            <person name="Muffato M."/>
            <person name="Collins J.E."/>
            <person name="Humphray S."/>
            <person name="McLaren K."/>
            <person name="Matthews L."/>
            <person name="McLaren S."/>
            <person name="Sealy I."/>
            <person name="Caccamo M."/>
            <person name="Churcher C."/>
            <person name="Scott C."/>
            <person name="Barrett J.C."/>
            <person name="Koch R."/>
            <person name="Rauch G.J."/>
            <person name="White S."/>
            <person name="Chow W."/>
            <person name="Kilian B."/>
            <person name="Quintais L.T."/>
            <person name="Guerra-Assuncao J.A."/>
            <person name="Zhou Y."/>
            <person name="Gu Y."/>
            <person name="Yen J."/>
            <person name="Vogel J.H."/>
            <person name="Eyre T."/>
            <person name="Redmond S."/>
            <person name="Banerjee R."/>
            <person name="Chi J."/>
            <person name="Fu B."/>
            <person name="Langley E."/>
            <person name="Maguire S.F."/>
            <person name="Laird G.K."/>
            <person name="Lloyd D."/>
            <person name="Kenyon E."/>
            <person name="Donaldson S."/>
            <person name="Sehra H."/>
            <person name="Almeida-King J."/>
            <person name="Loveland J."/>
            <person name="Trevanion S."/>
            <person name="Jones M."/>
            <person name="Quail M."/>
            <person name="Willey D."/>
            <person name="Hunt A."/>
            <person name="Burton J."/>
            <person name="Sims S."/>
            <person name="McLay K."/>
            <person name="Plumb B."/>
            <person name="Davis J."/>
            <person name="Clee C."/>
            <person name="Oliver K."/>
            <person name="Clark R."/>
            <person name="Riddle C."/>
            <person name="Elliot D."/>
            <person name="Threadgold G."/>
            <person name="Harden G."/>
            <person name="Ware D."/>
            <person name="Begum S."/>
            <person name="Mortimore B."/>
            <person name="Kerry G."/>
            <person name="Heath P."/>
            <person name="Phillimore B."/>
            <person name="Tracey A."/>
            <person name="Corby N."/>
            <person name="Dunn M."/>
            <person name="Johnson C."/>
            <person name="Wood J."/>
            <person name="Clark S."/>
            <person name="Pelan S."/>
            <person name="Griffiths G."/>
            <person name="Smith M."/>
            <person name="Glithero R."/>
            <person name="Howden P."/>
            <person name="Barker N."/>
            <person name="Lloyd C."/>
            <person name="Stevens C."/>
            <person name="Harley J."/>
            <person name="Holt K."/>
            <person name="Panagiotidis G."/>
            <person name="Lovell J."/>
            <person name="Beasley H."/>
            <person name="Henderson C."/>
            <person name="Gordon D."/>
            <person name="Auger K."/>
            <person name="Wright D."/>
            <person name="Collins J."/>
            <person name="Raisen C."/>
            <person name="Dyer L."/>
            <person name="Leung K."/>
            <person name="Robertson L."/>
            <person name="Ambridge K."/>
            <person name="Leongamornlert D."/>
            <person name="McGuire S."/>
            <person name="Gilderthorp R."/>
            <person name="Griffiths C."/>
            <person name="Manthravadi D."/>
            <person name="Nichol S."/>
            <person name="Barker G."/>
            <person name="Whitehead S."/>
            <person name="Kay M."/>
            <person name="Brown J."/>
            <person name="Murnane C."/>
            <person name="Gray E."/>
            <person name="Humphries M."/>
            <person name="Sycamore N."/>
            <person name="Barker D."/>
            <person name="Saunders D."/>
            <person name="Wallis J."/>
            <person name="Babbage A."/>
            <person name="Hammond S."/>
            <person name="Mashreghi-Mohammadi M."/>
            <person name="Barr L."/>
            <person name="Martin S."/>
            <person name="Wray P."/>
            <person name="Ellington A."/>
            <person name="Matthews N."/>
            <person name="Ellwood M."/>
            <person name="Woodmansey R."/>
            <person name="Clark G."/>
            <person name="Cooper J."/>
            <person name="Tromans A."/>
            <person name="Grafham D."/>
            <person name="Skuce C."/>
            <person name="Pandian R."/>
            <person name="Andrews R."/>
            <person name="Harrison E."/>
            <person name="Kimberley A."/>
            <person name="Garnett J."/>
            <person name="Fosker N."/>
            <person name="Hall R."/>
            <person name="Garner P."/>
            <person name="Kelly D."/>
            <person name="Bird C."/>
            <person name="Palmer S."/>
            <person name="Gehring I."/>
            <person name="Berger A."/>
            <person name="Dooley C.M."/>
            <person name="Ersan-Urun Z."/>
            <person name="Eser C."/>
            <person name="Geiger H."/>
            <person name="Geisler M."/>
            <person name="Karotki L."/>
            <person name="Kirn A."/>
            <person name="Konantz J."/>
            <person name="Konantz M."/>
            <person name="Oberlander M."/>
            <person name="Rudolph-Geiger S."/>
            <person name="Teucke M."/>
            <person name="Lanz C."/>
            <person name="Raddatz G."/>
            <person name="Osoegawa K."/>
            <person name="Zhu B."/>
            <person name="Rapp A."/>
            <person name="Widaa S."/>
            <person name="Langford C."/>
            <person name="Yang F."/>
            <person name="Schuster S.C."/>
            <person name="Carter N.P."/>
            <person name="Harrow J."/>
            <person name="Ning Z."/>
            <person name="Herrero J."/>
            <person name="Searle S.M."/>
            <person name="Enright A."/>
            <person name="Geisler R."/>
            <person name="Plasterk R.H."/>
            <person name="Lee C."/>
            <person name="Westerfield M."/>
            <person name="de Jong P.J."/>
            <person name="Zon L.I."/>
            <person name="Postlethwait J.H."/>
            <person name="Nusslein-Volhard C."/>
            <person name="Hubbard T.J."/>
            <person name="Roest Crollius H."/>
            <person name="Rogers J."/>
            <person name="Stemple D.L."/>
        </authorList>
    </citation>
    <scope>NUCLEOTIDE SEQUENCE [LARGE SCALE GENOMIC DNA]</scope>
    <source>
        <strain>Tuebingen</strain>
    </source>
</reference>
<reference key="2">
    <citation type="submission" date="2005-04" db="EMBL/GenBank/DDBJ databases">
        <authorList>
            <consortium name="NIH - Zebrafish Gene Collection (ZGC) project"/>
        </authorList>
    </citation>
    <scope>NUCLEOTIDE SEQUENCE [LARGE SCALE MRNA]</scope>
    <source>
        <tissue>Heart</tissue>
    </source>
</reference>
<accession>Q566R7</accession>
<accession>A8B8L3</accession>
<comment type="function">
    <text evidence="1">Activates the Jnk signaling pathway. Dephosphorylates and deactivates p38 and stress-activated protein kinase/c-Jun N-terminal kinase (SAPK/JNK) (By similarity).</text>
</comment>
<comment type="catalytic activity">
    <reaction>
        <text>O-phospho-L-tyrosyl-[protein] + H2O = L-tyrosyl-[protein] + phosphate</text>
        <dbReference type="Rhea" id="RHEA:10684"/>
        <dbReference type="Rhea" id="RHEA-COMP:10136"/>
        <dbReference type="Rhea" id="RHEA-COMP:20101"/>
        <dbReference type="ChEBI" id="CHEBI:15377"/>
        <dbReference type="ChEBI" id="CHEBI:43474"/>
        <dbReference type="ChEBI" id="CHEBI:46858"/>
        <dbReference type="ChEBI" id="CHEBI:61978"/>
        <dbReference type="EC" id="3.1.3.48"/>
    </reaction>
</comment>
<comment type="catalytic activity">
    <reaction>
        <text>O-phospho-L-seryl-[protein] + H2O = L-seryl-[protein] + phosphate</text>
        <dbReference type="Rhea" id="RHEA:20629"/>
        <dbReference type="Rhea" id="RHEA-COMP:9863"/>
        <dbReference type="Rhea" id="RHEA-COMP:11604"/>
        <dbReference type="ChEBI" id="CHEBI:15377"/>
        <dbReference type="ChEBI" id="CHEBI:29999"/>
        <dbReference type="ChEBI" id="CHEBI:43474"/>
        <dbReference type="ChEBI" id="CHEBI:83421"/>
        <dbReference type="EC" id="3.1.3.16"/>
    </reaction>
</comment>
<comment type="catalytic activity">
    <reaction>
        <text>O-phospho-L-threonyl-[protein] + H2O = L-threonyl-[protein] + phosphate</text>
        <dbReference type="Rhea" id="RHEA:47004"/>
        <dbReference type="Rhea" id="RHEA-COMP:11060"/>
        <dbReference type="Rhea" id="RHEA-COMP:11605"/>
        <dbReference type="ChEBI" id="CHEBI:15377"/>
        <dbReference type="ChEBI" id="CHEBI:30013"/>
        <dbReference type="ChEBI" id="CHEBI:43474"/>
        <dbReference type="ChEBI" id="CHEBI:61977"/>
        <dbReference type="EC" id="3.1.3.16"/>
    </reaction>
</comment>
<comment type="subcellular location">
    <subcellularLocation>
        <location evidence="1">Cytoplasm</location>
    </subcellularLocation>
    <subcellularLocation>
        <location evidence="1">Nucleus</location>
    </subcellularLocation>
</comment>
<comment type="similarity">
    <text evidence="3">Belongs to the protein-tyrosine phosphatase family. Non-receptor class dual specificity subfamily.</text>
</comment>
<protein>
    <recommendedName>
        <fullName>Dual specificity protein phosphatase 22-B</fullName>
        <ecNumber>3.1.3.16</ecNumber>
        <ecNumber>3.1.3.48</ecNumber>
    </recommendedName>
</protein>
<keyword id="KW-0963">Cytoplasm</keyword>
<keyword id="KW-0378">Hydrolase</keyword>
<keyword id="KW-0539">Nucleus</keyword>
<keyword id="KW-0904">Protein phosphatase</keyword>
<keyword id="KW-1185">Reference proteome</keyword>
<sequence>MGNGINKVLPDLYLGNFKDARDREQLARNNITHILSIHDTAAPILQEMTYLCIAAADSPTQNLIQHFRQSIAFIHQSRLKGEGCLVHCLAGVSRSVTLVVAYIMTVTTLGWQEALAAVKIARPCASPNTGFQNQLQEFQTGELQQFREWLKEEYKENPFNDEEDIRNLLTKASTEEDAELQNN</sequence>
<dbReference type="EC" id="3.1.3.16"/>
<dbReference type="EC" id="3.1.3.48"/>
<dbReference type="EMBL" id="AL935300">
    <property type="status" value="NOT_ANNOTATED_CDS"/>
    <property type="molecule type" value="Genomic_DNA"/>
</dbReference>
<dbReference type="EMBL" id="CT962510">
    <property type="status" value="NOT_ANNOTATED_CDS"/>
    <property type="molecule type" value="Genomic_DNA"/>
</dbReference>
<dbReference type="EMBL" id="BC093370">
    <property type="protein sequence ID" value="AAH93370.1"/>
    <property type="molecule type" value="mRNA"/>
</dbReference>
<dbReference type="RefSeq" id="NP_001017742.2">
    <property type="nucleotide sequence ID" value="NM_001017742.2"/>
</dbReference>
<dbReference type="SMR" id="Q566R7"/>
<dbReference type="FunCoup" id="Q566R7">
    <property type="interactions" value="72"/>
</dbReference>
<dbReference type="STRING" id="7955.ENSDARP00000058288"/>
<dbReference type="PaxDb" id="7955-ENSDARP00000058288"/>
<dbReference type="Ensembl" id="ENSDART00000058289">
    <property type="protein sequence ID" value="ENSDARP00000058288"/>
    <property type="gene ID" value="ENSDARG00000039850"/>
</dbReference>
<dbReference type="GeneID" id="100002272"/>
<dbReference type="KEGG" id="dre:100002272"/>
<dbReference type="AGR" id="ZFIN:ZDB-GENE-050417-257"/>
<dbReference type="CTD" id="100002272"/>
<dbReference type="ZFIN" id="ZDB-GENE-050417-257">
    <property type="gene designation" value="dusp22b"/>
</dbReference>
<dbReference type="eggNOG" id="KOG1716">
    <property type="taxonomic scope" value="Eukaryota"/>
</dbReference>
<dbReference type="HOGENOM" id="CLU_027074_5_0_1"/>
<dbReference type="InParanoid" id="Q566R7"/>
<dbReference type="OMA" id="CAYLMWK"/>
<dbReference type="OrthoDB" id="9979246at2759"/>
<dbReference type="PhylomeDB" id="Q566R7"/>
<dbReference type="TreeFam" id="TF105126"/>
<dbReference type="PRO" id="PR:Q566R7"/>
<dbReference type="Proteomes" id="UP000000437">
    <property type="component" value="Chromosome 2"/>
</dbReference>
<dbReference type="Bgee" id="ENSDARG00000039850">
    <property type="expression patterns" value="Expressed in testis and 21 other cell types or tissues"/>
</dbReference>
<dbReference type="GO" id="GO:0005829">
    <property type="term" value="C:cytosol"/>
    <property type="evidence" value="ECO:0000318"/>
    <property type="project" value="GO_Central"/>
</dbReference>
<dbReference type="GO" id="GO:0005634">
    <property type="term" value="C:nucleus"/>
    <property type="evidence" value="ECO:0007669"/>
    <property type="project" value="UniProtKB-SubCell"/>
</dbReference>
<dbReference type="GO" id="GO:0004722">
    <property type="term" value="F:protein serine/threonine phosphatase activity"/>
    <property type="evidence" value="ECO:0007669"/>
    <property type="project" value="UniProtKB-EC"/>
</dbReference>
<dbReference type="GO" id="GO:0004725">
    <property type="term" value="F:protein tyrosine phosphatase activity"/>
    <property type="evidence" value="ECO:0000318"/>
    <property type="project" value="GO_Central"/>
</dbReference>
<dbReference type="GO" id="GO:0007165">
    <property type="term" value="P:signal transduction"/>
    <property type="evidence" value="ECO:0000318"/>
    <property type="project" value="GO_Central"/>
</dbReference>
<dbReference type="CDD" id="cd14581">
    <property type="entry name" value="DUSP22"/>
    <property type="match status" value="1"/>
</dbReference>
<dbReference type="FunFam" id="3.90.190.10:FF:000048">
    <property type="entry name" value="dual specificity protein phosphatase 22 isoform X1"/>
    <property type="match status" value="1"/>
</dbReference>
<dbReference type="Gene3D" id="3.90.190.10">
    <property type="entry name" value="Protein tyrosine phosphatase superfamily"/>
    <property type="match status" value="1"/>
</dbReference>
<dbReference type="InterPro" id="IPR000340">
    <property type="entry name" value="Dual-sp_phosphatase_cat-dom"/>
</dbReference>
<dbReference type="InterPro" id="IPR029021">
    <property type="entry name" value="Prot-tyrosine_phosphatase-like"/>
</dbReference>
<dbReference type="InterPro" id="IPR000387">
    <property type="entry name" value="Tyr_Pase_dom"/>
</dbReference>
<dbReference type="InterPro" id="IPR020422">
    <property type="entry name" value="TYR_PHOSPHATASE_DUAL_dom"/>
</dbReference>
<dbReference type="PANTHER" id="PTHR45948:SF3">
    <property type="entry name" value="DUAL SPECIFICITY PROTEIN PHOSPHATASE 22"/>
    <property type="match status" value="1"/>
</dbReference>
<dbReference type="PANTHER" id="PTHR45948">
    <property type="entry name" value="DUAL SPECIFICITY PROTEIN PHOSPHATASE DDB_G0269404-RELATED"/>
    <property type="match status" value="1"/>
</dbReference>
<dbReference type="Pfam" id="PF00782">
    <property type="entry name" value="DSPc"/>
    <property type="match status" value="1"/>
</dbReference>
<dbReference type="PRINTS" id="PR01908">
    <property type="entry name" value="ADSPHPHTASE"/>
</dbReference>
<dbReference type="SMART" id="SM00195">
    <property type="entry name" value="DSPc"/>
    <property type="match status" value="1"/>
</dbReference>
<dbReference type="SUPFAM" id="SSF52799">
    <property type="entry name" value="(Phosphotyrosine protein) phosphatases II"/>
    <property type="match status" value="1"/>
</dbReference>
<dbReference type="PROSITE" id="PS50056">
    <property type="entry name" value="TYR_PHOSPHATASE_2"/>
    <property type="match status" value="1"/>
</dbReference>
<dbReference type="PROSITE" id="PS50054">
    <property type="entry name" value="TYR_PHOSPHATASE_DUAL"/>
    <property type="match status" value="1"/>
</dbReference>
<name>DS22B_DANRE</name>